<organism>
    <name type="scientific">Thermococcus onnurineus (strain NA1)</name>
    <dbReference type="NCBI Taxonomy" id="523850"/>
    <lineage>
        <taxon>Archaea</taxon>
        <taxon>Methanobacteriati</taxon>
        <taxon>Methanobacteriota</taxon>
        <taxon>Thermococci</taxon>
        <taxon>Thermococcales</taxon>
        <taxon>Thermococcaceae</taxon>
        <taxon>Thermococcus</taxon>
    </lineage>
</organism>
<proteinExistence type="inferred from homology"/>
<feature type="chain" id="PRO_1000130583" description="Large ribosomal subunit protein eL39">
    <location>
        <begin position="1"/>
        <end position="51"/>
    </location>
</feature>
<reference key="1">
    <citation type="journal article" date="2008" name="J. Bacteriol.">
        <title>The complete genome sequence of Thermococcus onnurineus NA1 reveals a mixed heterotrophic and carboxydotrophic metabolism.</title>
        <authorList>
            <person name="Lee H.S."/>
            <person name="Kang S.G."/>
            <person name="Bae S.S."/>
            <person name="Lim J.K."/>
            <person name="Cho Y."/>
            <person name="Kim Y.J."/>
            <person name="Jeon J.H."/>
            <person name="Cha S.-S."/>
            <person name="Kwon K.K."/>
            <person name="Kim H.-T."/>
            <person name="Park C.-J."/>
            <person name="Lee H.-W."/>
            <person name="Kim S.I."/>
            <person name="Chun J."/>
            <person name="Colwell R.R."/>
            <person name="Kim S.-J."/>
            <person name="Lee J.-H."/>
        </authorList>
    </citation>
    <scope>NUCLEOTIDE SEQUENCE [LARGE SCALE GENOMIC DNA]</scope>
    <source>
        <strain>NA1</strain>
    </source>
</reference>
<name>RL39_THEON</name>
<gene>
    <name evidence="1" type="primary">rpl39e</name>
    <name type="ordered locus">TON_1109</name>
</gene>
<evidence type="ECO:0000255" key="1">
    <source>
        <dbReference type="HAMAP-Rule" id="MF_00629"/>
    </source>
</evidence>
<evidence type="ECO:0000305" key="2"/>
<dbReference type="EMBL" id="CP000855">
    <property type="protein sequence ID" value="ACJ16597.1"/>
    <property type="molecule type" value="Genomic_DNA"/>
</dbReference>
<dbReference type="RefSeq" id="WP_012572069.1">
    <property type="nucleotide sequence ID" value="NC_011529.1"/>
</dbReference>
<dbReference type="SMR" id="B6YWY4"/>
<dbReference type="STRING" id="523850.TON_1109"/>
<dbReference type="GeneID" id="28494736"/>
<dbReference type="GeneID" id="7018131"/>
<dbReference type="KEGG" id="ton:TON_1109"/>
<dbReference type="PATRIC" id="fig|523850.10.peg.1117"/>
<dbReference type="eggNOG" id="arCOG04177">
    <property type="taxonomic scope" value="Archaea"/>
</dbReference>
<dbReference type="HOGENOM" id="CLU_181948_4_0_2"/>
<dbReference type="Proteomes" id="UP000002727">
    <property type="component" value="Chromosome"/>
</dbReference>
<dbReference type="GO" id="GO:1990904">
    <property type="term" value="C:ribonucleoprotein complex"/>
    <property type="evidence" value="ECO:0007669"/>
    <property type="project" value="UniProtKB-KW"/>
</dbReference>
<dbReference type="GO" id="GO:0005840">
    <property type="term" value="C:ribosome"/>
    <property type="evidence" value="ECO:0007669"/>
    <property type="project" value="UniProtKB-KW"/>
</dbReference>
<dbReference type="GO" id="GO:0003735">
    <property type="term" value="F:structural constituent of ribosome"/>
    <property type="evidence" value="ECO:0007669"/>
    <property type="project" value="InterPro"/>
</dbReference>
<dbReference type="GO" id="GO:0006412">
    <property type="term" value="P:translation"/>
    <property type="evidence" value="ECO:0007669"/>
    <property type="project" value="UniProtKB-UniRule"/>
</dbReference>
<dbReference type="FunFam" id="1.10.1620.10:FF:000001">
    <property type="entry name" value="60S ribosomal protein-like L39"/>
    <property type="match status" value="1"/>
</dbReference>
<dbReference type="Gene3D" id="1.10.1620.10">
    <property type="entry name" value="Ribosomal protein L39e"/>
    <property type="match status" value="1"/>
</dbReference>
<dbReference type="HAMAP" id="MF_00629">
    <property type="entry name" value="Ribosomal_eL39"/>
    <property type="match status" value="1"/>
</dbReference>
<dbReference type="InterPro" id="IPR000077">
    <property type="entry name" value="Ribosomal_eL39"/>
</dbReference>
<dbReference type="InterPro" id="IPR023626">
    <property type="entry name" value="Ribosomal_eL39_dom_sf"/>
</dbReference>
<dbReference type="NCBIfam" id="NF002316">
    <property type="entry name" value="PRK01242.1"/>
    <property type="match status" value="1"/>
</dbReference>
<dbReference type="Pfam" id="PF00832">
    <property type="entry name" value="Ribosomal_L39"/>
    <property type="match status" value="1"/>
</dbReference>
<dbReference type="SUPFAM" id="SSF48662">
    <property type="entry name" value="Ribosomal protein L39e"/>
    <property type="match status" value="1"/>
</dbReference>
<sequence>MARNKPLAKKLRLAKAAKQNRRVPVWVIVKTNRKVMTHPKRRMWRRTKLKE</sequence>
<comment type="similarity">
    <text evidence="1">Belongs to the eukaryotic ribosomal protein eL39 family.</text>
</comment>
<accession>B6YWY4</accession>
<protein>
    <recommendedName>
        <fullName evidence="1">Large ribosomal subunit protein eL39</fullName>
    </recommendedName>
    <alternativeName>
        <fullName evidence="2">50S ribosomal protein L39e</fullName>
    </alternativeName>
</protein>
<keyword id="KW-0687">Ribonucleoprotein</keyword>
<keyword id="KW-0689">Ribosomal protein</keyword>